<proteinExistence type="inferred from homology"/>
<geneLocation type="chloroplast"/>
<evidence type="ECO:0000255" key="1">
    <source>
        <dbReference type="HAMAP-Rule" id="MF_01391"/>
    </source>
</evidence>
<comment type="function">
    <text evidence="1">Required during biogenesis of c-type cytochromes (cytochrome c6 and cytochrome f) at the step of heme attachment.</text>
</comment>
<comment type="subunit">
    <text evidence="1">May interact with Ccs1.</text>
</comment>
<comment type="subcellular location">
    <subcellularLocation>
        <location evidence="1">Plastid</location>
        <location evidence="1">Chloroplast thylakoid membrane</location>
        <topology evidence="1">Multi-pass membrane protein</topology>
    </subcellularLocation>
</comment>
<comment type="similarity">
    <text evidence="1">Belongs to the CcmF/CycK/Ccl1/NrfE/CcsA family.</text>
</comment>
<protein>
    <recommendedName>
        <fullName evidence="1">Cytochrome c biogenesis protein CcsA</fullName>
    </recommendedName>
</protein>
<accession>P46659</accession>
<gene>
    <name evidence="1" type="primary">ccsA</name>
</gene>
<reference key="1">
    <citation type="journal article" date="1995" name="J. Mol. Biol.">
        <title>Complete sequence of the maize chloroplast genome: gene content, hotspots of divergence and fine tuning of genetic information by transcript editing.</title>
        <authorList>
            <person name="Maier R.M."/>
            <person name="Neckermann K."/>
            <person name="Igloi G.L."/>
            <person name="Koessel H."/>
        </authorList>
    </citation>
    <scope>NUCLEOTIDE SEQUENCE [LARGE SCALE GENOMIC DNA]</scope>
    <source>
        <strain>cv. B73</strain>
    </source>
</reference>
<keyword id="KW-0150">Chloroplast</keyword>
<keyword id="KW-0201">Cytochrome c-type biogenesis</keyword>
<keyword id="KW-0472">Membrane</keyword>
<keyword id="KW-0934">Plastid</keyword>
<keyword id="KW-1185">Reference proteome</keyword>
<keyword id="KW-0793">Thylakoid</keyword>
<keyword id="KW-0812">Transmembrane</keyword>
<keyword id="KW-1133">Transmembrane helix</keyword>
<dbReference type="EMBL" id="X86563">
    <property type="protein sequence ID" value="CAA60348.1"/>
    <property type="molecule type" value="Genomic_DNA"/>
</dbReference>
<dbReference type="PIR" id="S58614">
    <property type="entry name" value="S58614"/>
</dbReference>
<dbReference type="RefSeq" id="NP_043086.1">
    <property type="nucleotide sequence ID" value="NC_001666.2"/>
</dbReference>
<dbReference type="SMR" id="P46659"/>
<dbReference type="FunCoup" id="P46659">
    <property type="interactions" value="32"/>
</dbReference>
<dbReference type="STRING" id="4577.P46659"/>
<dbReference type="GeneID" id="1466378"/>
<dbReference type="KEGG" id="zma:1466378"/>
<dbReference type="MaizeGDB" id="118255"/>
<dbReference type="InParanoid" id="P46659"/>
<dbReference type="OrthoDB" id="760839at2759"/>
<dbReference type="Proteomes" id="UP000007305">
    <property type="component" value="Chloroplast"/>
</dbReference>
<dbReference type="GO" id="GO:0009535">
    <property type="term" value="C:chloroplast thylakoid membrane"/>
    <property type="evidence" value="ECO:0007669"/>
    <property type="project" value="UniProtKB-SubCell"/>
</dbReference>
<dbReference type="GO" id="GO:0020037">
    <property type="term" value="F:heme binding"/>
    <property type="evidence" value="ECO:0007669"/>
    <property type="project" value="InterPro"/>
</dbReference>
<dbReference type="GO" id="GO:0017004">
    <property type="term" value="P:cytochrome complex assembly"/>
    <property type="evidence" value="ECO:0007669"/>
    <property type="project" value="UniProtKB-UniRule"/>
</dbReference>
<dbReference type="HAMAP" id="MF_01391">
    <property type="entry name" value="CytC_CcsA"/>
    <property type="match status" value="1"/>
</dbReference>
<dbReference type="InterPro" id="IPR002541">
    <property type="entry name" value="Cyt_c_assembly"/>
</dbReference>
<dbReference type="InterPro" id="IPR017562">
    <property type="entry name" value="Cyt_c_biogenesis_CcsA"/>
</dbReference>
<dbReference type="InterPro" id="IPR045062">
    <property type="entry name" value="Cyt_c_biogenesis_CcsA/CcmC"/>
</dbReference>
<dbReference type="NCBIfam" id="TIGR03144">
    <property type="entry name" value="cytochr_II_ccsB"/>
    <property type="match status" value="1"/>
</dbReference>
<dbReference type="PANTHER" id="PTHR30071:SF1">
    <property type="entry name" value="CYTOCHROME B_B6 PROTEIN-RELATED"/>
    <property type="match status" value="1"/>
</dbReference>
<dbReference type="PANTHER" id="PTHR30071">
    <property type="entry name" value="HEME EXPORTER PROTEIN C"/>
    <property type="match status" value="1"/>
</dbReference>
<dbReference type="Pfam" id="PF01578">
    <property type="entry name" value="Cytochrom_C_asm"/>
    <property type="match status" value="1"/>
</dbReference>
<organism>
    <name type="scientific">Zea mays</name>
    <name type="common">Maize</name>
    <dbReference type="NCBI Taxonomy" id="4577"/>
    <lineage>
        <taxon>Eukaryota</taxon>
        <taxon>Viridiplantae</taxon>
        <taxon>Streptophyta</taxon>
        <taxon>Embryophyta</taxon>
        <taxon>Tracheophyta</taxon>
        <taxon>Spermatophyta</taxon>
        <taxon>Magnoliopsida</taxon>
        <taxon>Liliopsida</taxon>
        <taxon>Poales</taxon>
        <taxon>Poaceae</taxon>
        <taxon>PACMAD clade</taxon>
        <taxon>Panicoideae</taxon>
        <taxon>Andropogonodae</taxon>
        <taxon>Andropogoneae</taxon>
        <taxon>Tripsacinae</taxon>
        <taxon>Zea</taxon>
    </lineage>
</organism>
<feature type="chain" id="PRO_0000201606" description="Cytochrome c biogenesis protein CcsA">
    <location>
        <begin position="1"/>
        <end position="321"/>
    </location>
</feature>
<feature type="transmembrane region" description="Helical" evidence="1">
    <location>
        <begin position="9"/>
        <end position="29"/>
    </location>
</feature>
<feature type="transmembrane region" description="Helical" evidence="1">
    <location>
        <begin position="44"/>
        <end position="64"/>
    </location>
</feature>
<feature type="transmembrane region" description="Helical" evidence="1">
    <location>
        <begin position="68"/>
        <end position="88"/>
    </location>
</feature>
<feature type="transmembrane region" description="Helical" evidence="1">
    <location>
        <begin position="143"/>
        <end position="163"/>
    </location>
</feature>
<feature type="transmembrane region" description="Helical" evidence="1">
    <location>
        <begin position="225"/>
        <end position="245"/>
    </location>
</feature>
<feature type="transmembrane region" description="Helical" evidence="1">
    <location>
        <begin position="259"/>
        <end position="273"/>
    </location>
</feature>
<feature type="transmembrane region" description="Helical" evidence="1">
    <location>
        <begin position="288"/>
        <end position="308"/>
    </location>
</feature>
<name>CCSA_MAIZE</name>
<sequence>MLFATLEHILTHISFSTISIVITIHLITLLVRELRGLRDSSEKGMIATFFSITGFLVSRWVSSGHFPLSNLYESLIFLSWTLYILHTIPKIQNSKNDLSTITTPSTILTQGFATSGLLTEMHQSTILVPALQSQWLMMHVSMMLLSYATLLCGSLLSAALLIIRFRKNFDFFSLKKNVFLKTFFFSEIEYLYAKRSALKNTSFPVFPNYYKYQLTERLDSWSYRVISLGFTLLTVGILCGAVWANEAWGSYWNWDPKETWAFITWTIFAIYLHSRKNPNWKGTNSALVASIGFLIIWICYFGINLLGIGLHSYGSFTLPSK</sequence>